<feature type="chain" id="PRO_0000427762" description="Probable transport protein MmpL1">
    <location>
        <begin position="1"/>
        <end position="958"/>
    </location>
</feature>
<feature type="transmembrane region" description="Helical" evidence="1">
    <location>
        <begin position="19"/>
        <end position="39"/>
    </location>
</feature>
<feature type="transmembrane region" description="Helical" evidence="1">
    <location>
        <begin position="192"/>
        <end position="212"/>
    </location>
</feature>
<feature type="transmembrane region" description="Helical" evidence="1">
    <location>
        <begin position="216"/>
        <end position="236"/>
    </location>
</feature>
<feature type="transmembrane region" description="Helical" evidence="1">
    <location>
        <begin position="252"/>
        <end position="272"/>
    </location>
</feature>
<feature type="transmembrane region" description="Helical" evidence="1">
    <location>
        <begin position="295"/>
        <end position="315"/>
    </location>
</feature>
<feature type="transmembrane region" description="Helical" evidence="1">
    <location>
        <begin position="329"/>
        <end position="349"/>
    </location>
</feature>
<feature type="transmembrane region" description="Helical" evidence="1">
    <location>
        <begin position="377"/>
        <end position="397"/>
    </location>
</feature>
<feature type="transmembrane region" description="Helical" evidence="1">
    <location>
        <begin position="762"/>
        <end position="782"/>
    </location>
</feature>
<feature type="transmembrane region" description="Helical" evidence="1">
    <location>
        <begin position="791"/>
        <end position="811"/>
    </location>
</feature>
<feature type="transmembrane region" description="Helical" evidence="1">
    <location>
        <begin position="814"/>
        <end position="834"/>
    </location>
</feature>
<feature type="transmembrane region" description="Helical" evidence="1">
    <location>
        <begin position="868"/>
        <end position="888"/>
    </location>
</feature>
<feature type="transmembrane region" description="Helical" evidence="1">
    <location>
        <begin position="906"/>
        <end position="927"/>
    </location>
</feature>
<accession>P9WJV8</accession>
<accession>L0T6D0</accession>
<accession>P95211</accession>
<name>MMPL1_MYCTO</name>
<proteinExistence type="inferred from homology"/>
<sequence>MRSQRLAGHLSAAARTIHALSLPIILFWVALTIVVNVVAPQLQSVARTHSVALGPHDAPSLIAMKRIGKDFQQFDSDTTAMVLLEGQEKLGDEAHRFYDVLVTKLSQDTTHVQHIENFWGDPLTAAGSQSADGKAAYVQLNLTGDQGGSQANESVAAVQRIVDSVPPPPGIKAYVTGPGPLGADRVVYGDRSLHTITGISIAVIAIMLFIAYRSLSAALIMLLTVGLELLAVRGIISTFAVNDLMGLSTFTVNVLVALTIAASTDYIIFLVGRYQEARATGQNREAAYYTMFGGTAHVVLASGLTVAGAMYCLGFTRLPYFNTLASPCAIGLVTVMLASLTLAPAIIAVASRFGLFDPKRATTKRRWRRIGTVVVRWPGPVLAATLLIALIGLLALPKYQTNYNERYYIPSAAPSNIGYLASDRHFPQARMEPEVLMVEADHDLRNPTDMLILDRIAKTVFHTPGIARVQSITRPLGAPIDHSSIPFQLGMQSTMTIENLQNLKDRVADLSTLTDQLQRMIDITQRTQELTRQLTDATHDMNAHTRQMRDNANELRDRIADFDDFWRPLRSFTYWERHCFDIPICWSMRSLLNSMDNVDKLTEDLANLTDDTERMDTTQRQLLAQLDPTIATMQTVKDLAQTLTSAFSGLVTQMEDMTRNATVMGRTFDAANNDDSFYLPPEAFQNPDFQRGLKLFLSPDGTCARFVITHRGDPASAEGISHIDPIMQAADEAVKGTPLQAASIYLAGTSSTYKDIHEGTLYDVMIAVVASLCLIFIIMLGITRSVVASAVIVGTVALSLGSAFGLSVLIWQHILHMPLHWLVLPMAIIVMLAVGSDYNLLLIARFQEEIGAGLKTGMIRAMAGTGRVVTIAGLVFAFTMGSMVASDLRVVGQIGTTIMIGLLFDTLVVRSYMTPALATLLGRWFWWPRRVDRLARQPQVLGPRRTTALSAERAALLQ</sequence>
<reference key="1">
    <citation type="journal article" date="2002" name="J. Bacteriol.">
        <title>Whole-genome comparison of Mycobacterium tuberculosis clinical and laboratory strains.</title>
        <authorList>
            <person name="Fleischmann R.D."/>
            <person name="Alland D."/>
            <person name="Eisen J.A."/>
            <person name="Carpenter L."/>
            <person name="White O."/>
            <person name="Peterson J.D."/>
            <person name="DeBoy R.T."/>
            <person name="Dodson R.J."/>
            <person name="Gwinn M.L."/>
            <person name="Haft D.H."/>
            <person name="Hickey E.K."/>
            <person name="Kolonay J.F."/>
            <person name="Nelson W.C."/>
            <person name="Umayam L.A."/>
            <person name="Ermolaeva M.D."/>
            <person name="Salzberg S.L."/>
            <person name="Delcher A."/>
            <person name="Utterback T.R."/>
            <person name="Weidman J.F."/>
            <person name="Khouri H.M."/>
            <person name="Gill J."/>
            <person name="Mikula A."/>
            <person name="Bishai W."/>
            <person name="Jacobs W.R. Jr."/>
            <person name="Venter J.C."/>
            <person name="Fraser C.M."/>
        </authorList>
    </citation>
    <scope>NUCLEOTIDE SEQUENCE [LARGE SCALE GENOMIC DNA]</scope>
    <source>
        <strain>CDC 1551 / Oshkosh</strain>
    </source>
</reference>
<evidence type="ECO:0000255" key="1"/>
<evidence type="ECO:0000305" key="2"/>
<protein>
    <recommendedName>
        <fullName evidence="2">Probable transport protein MmpL1</fullName>
    </recommendedName>
</protein>
<dbReference type="EMBL" id="AE000516">
    <property type="protein sequence ID" value="AAK44636.1"/>
    <property type="molecule type" value="Genomic_DNA"/>
</dbReference>
<dbReference type="PIR" id="A70634">
    <property type="entry name" value="A70634"/>
</dbReference>
<dbReference type="RefSeq" id="WP_003898435.1">
    <property type="nucleotide sequence ID" value="NZ_KK341227.1"/>
</dbReference>
<dbReference type="SMR" id="P9WJV8"/>
<dbReference type="KEGG" id="mtc:MT0412"/>
<dbReference type="PATRIC" id="fig|83331.31.peg.442"/>
<dbReference type="HOGENOM" id="CLU_005108_3_2_11"/>
<dbReference type="Proteomes" id="UP000001020">
    <property type="component" value="Chromosome"/>
</dbReference>
<dbReference type="GO" id="GO:0005886">
    <property type="term" value="C:plasma membrane"/>
    <property type="evidence" value="ECO:0007669"/>
    <property type="project" value="UniProtKB-SubCell"/>
</dbReference>
<dbReference type="FunFam" id="1.20.1640.10:FF:000018">
    <property type="entry name" value="Transmembrane transport protein MmpL10"/>
    <property type="match status" value="1"/>
</dbReference>
<dbReference type="FunFam" id="1.20.1640.10:FF:000020">
    <property type="entry name" value="Transmembrane transport protein MmpL10"/>
    <property type="match status" value="1"/>
</dbReference>
<dbReference type="Gene3D" id="1.20.1640.10">
    <property type="entry name" value="Multidrug efflux transporter AcrB transmembrane domain"/>
    <property type="match status" value="2"/>
</dbReference>
<dbReference type="InterPro" id="IPR004869">
    <property type="entry name" value="MMPL_dom"/>
</dbReference>
<dbReference type="InterPro" id="IPR004707">
    <property type="entry name" value="MmpL_fam"/>
</dbReference>
<dbReference type="InterPro" id="IPR050545">
    <property type="entry name" value="Mycobact_MmpL"/>
</dbReference>
<dbReference type="NCBIfam" id="TIGR00833">
    <property type="entry name" value="actII"/>
    <property type="match status" value="1"/>
</dbReference>
<dbReference type="PANTHER" id="PTHR33406">
    <property type="entry name" value="MEMBRANE PROTEIN MJ1562-RELATED"/>
    <property type="match status" value="1"/>
</dbReference>
<dbReference type="PANTHER" id="PTHR33406:SF6">
    <property type="entry name" value="MEMBRANE PROTEIN YDGH-RELATED"/>
    <property type="match status" value="1"/>
</dbReference>
<dbReference type="Pfam" id="PF03176">
    <property type="entry name" value="MMPL"/>
    <property type="match status" value="2"/>
</dbReference>
<dbReference type="SUPFAM" id="SSF82866">
    <property type="entry name" value="Multidrug efflux transporter AcrB transmembrane domain"/>
    <property type="match status" value="2"/>
</dbReference>
<organism>
    <name type="scientific">Mycobacterium tuberculosis (strain CDC 1551 / Oshkosh)</name>
    <dbReference type="NCBI Taxonomy" id="83331"/>
    <lineage>
        <taxon>Bacteria</taxon>
        <taxon>Bacillati</taxon>
        <taxon>Actinomycetota</taxon>
        <taxon>Actinomycetes</taxon>
        <taxon>Mycobacteriales</taxon>
        <taxon>Mycobacteriaceae</taxon>
        <taxon>Mycobacterium</taxon>
        <taxon>Mycobacterium tuberculosis complex</taxon>
    </lineage>
</organism>
<keyword id="KW-1003">Cell membrane</keyword>
<keyword id="KW-0472">Membrane</keyword>
<keyword id="KW-1185">Reference proteome</keyword>
<keyword id="KW-0812">Transmembrane</keyword>
<keyword id="KW-1133">Transmembrane helix</keyword>
<keyword id="KW-0813">Transport</keyword>
<comment type="subcellular location">
    <subcellularLocation>
        <location evidence="2">Cell membrane</location>
        <topology evidence="1">Multi-pass membrane protein</topology>
    </subcellularLocation>
</comment>
<comment type="similarity">
    <text evidence="2">Belongs to the resistance-nodulation-cell division (RND) (TC 2.A.6) family. MmpL subfamily.</text>
</comment>
<gene>
    <name type="primary">mmpL1</name>
    <name type="ordered locus">MT0412</name>
</gene>